<gene>
    <name evidence="1" type="primary">greA</name>
    <name type="ordered locus">SPT_1455</name>
</gene>
<proteinExistence type="inferred from homology"/>
<comment type="function">
    <text evidence="1">Necessary for efficient RNA polymerase transcription elongation past template-encoded arresting sites. The arresting sites in DNA have the property of trapping a certain fraction of elongating RNA polymerases that pass through, resulting in locked ternary complexes. Cleavage of the nascent transcript by cleavage factors such as GreA or GreB allows the resumption of elongation from the new 3'terminus. GreA releases sequences of 2 to 3 nucleotides.</text>
</comment>
<comment type="similarity">
    <text evidence="1">Belongs to the GreA/GreB family.</text>
</comment>
<keyword id="KW-0175">Coiled coil</keyword>
<keyword id="KW-0238">DNA-binding</keyword>
<keyword id="KW-0804">Transcription</keyword>
<keyword id="KW-0805">Transcription regulation</keyword>
<feature type="chain" id="PRO_1000118974" description="Transcription elongation factor GreA">
    <location>
        <begin position="1"/>
        <end position="160"/>
    </location>
</feature>
<feature type="coiled-coil region" evidence="1">
    <location>
        <begin position="1"/>
        <end position="72"/>
    </location>
</feature>
<sequence length="160" mass="17544">MAEKTYPMTLEEKEKLEKELEELKLVRRPEVVERIKIARSYGDLSENSEYEAAKDEQAFVEGQISSLETKIRYAEIVNSDAVAQDEVAIGKTVTIQEIGEDEEEVYIIVGSAGADAFAGKVSNESPIGQALIGKKTGDTATIETPVGSYDVKILKVEKTA</sequence>
<name>GREA_STRZT</name>
<accession>C1CSD7</accession>
<reference key="1">
    <citation type="journal article" date="2010" name="Genome Biol.">
        <title>Structure and dynamics of the pan-genome of Streptococcus pneumoniae and closely related species.</title>
        <authorList>
            <person name="Donati C."/>
            <person name="Hiller N.L."/>
            <person name="Tettelin H."/>
            <person name="Muzzi A."/>
            <person name="Croucher N.J."/>
            <person name="Angiuoli S.V."/>
            <person name="Oggioni M."/>
            <person name="Dunning Hotopp J.C."/>
            <person name="Hu F.Z."/>
            <person name="Riley D.R."/>
            <person name="Covacci A."/>
            <person name="Mitchell T.J."/>
            <person name="Bentley S.D."/>
            <person name="Kilian M."/>
            <person name="Ehrlich G.D."/>
            <person name="Rappuoli R."/>
            <person name="Moxon E.R."/>
            <person name="Masignani V."/>
        </authorList>
    </citation>
    <scope>NUCLEOTIDE SEQUENCE [LARGE SCALE GENOMIC DNA]</scope>
    <source>
        <strain>Taiwan19F-14</strain>
    </source>
</reference>
<protein>
    <recommendedName>
        <fullName evidence="1">Transcription elongation factor GreA</fullName>
    </recommendedName>
    <alternativeName>
        <fullName evidence="1">Transcript cleavage factor GreA</fullName>
    </alternativeName>
</protein>
<evidence type="ECO:0000255" key="1">
    <source>
        <dbReference type="HAMAP-Rule" id="MF_00105"/>
    </source>
</evidence>
<dbReference type="EMBL" id="CP000921">
    <property type="protein sequence ID" value="ACO22602.1"/>
    <property type="molecule type" value="Genomic_DNA"/>
</dbReference>
<dbReference type="RefSeq" id="WP_000818760.1">
    <property type="nucleotide sequence ID" value="NC_012469.1"/>
</dbReference>
<dbReference type="SMR" id="C1CSD7"/>
<dbReference type="GeneID" id="45653244"/>
<dbReference type="KEGG" id="snt:SPT_1455"/>
<dbReference type="HOGENOM" id="CLU_101379_2_1_9"/>
<dbReference type="GO" id="GO:0003677">
    <property type="term" value="F:DNA binding"/>
    <property type="evidence" value="ECO:0007669"/>
    <property type="project" value="UniProtKB-UniRule"/>
</dbReference>
<dbReference type="GO" id="GO:0070063">
    <property type="term" value="F:RNA polymerase binding"/>
    <property type="evidence" value="ECO:0007669"/>
    <property type="project" value="InterPro"/>
</dbReference>
<dbReference type="GO" id="GO:0006354">
    <property type="term" value="P:DNA-templated transcription elongation"/>
    <property type="evidence" value="ECO:0007669"/>
    <property type="project" value="TreeGrafter"/>
</dbReference>
<dbReference type="GO" id="GO:0032784">
    <property type="term" value="P:regulation of DNA-templated transcription elongation"/>
    <property type="evidence" value="ECO:0007669"/>
    <property type="project" value="UniProtKB-UniRule"/>
</dbReference>
<dbReference type="FunFam" id="1.10.287.180:FF:000001">
    <property type="entry name" value="Transcription elongation factor GreA"/>
    <property type="match status" value="1"/>
</dbReference>
<dbReference type="FunFam" id="3.10.50.30:FF:000001">
    <property type="entry name" value="Transcription elongation factor GreA"/>
    <property type="match status" value="1"/>
</dbReference>
<dbReference type="Gene3D" id="3.10.50.30">
    <property type="entry name" value="Transcription elongation factor, GreA/GreB, C-terminal domain"/>
    <property type="match status" value="1"/>
</dbReference>
<dbReference type="Gene3D" id="1.10.287.180">
    <property type="entry name" value="Transcription elongation factor, GreA/GreB, N-terminal domain"/>
    <property type="match status" value="1"/>
</dbReference>
<dbReference type="HAMAP" id="MF_00105">
    <property type="entry name" value="GreA_GreB"/>
    <property type="match status" value="1"/>
</dbReference>
<dbReference type="InterPro" id="IPR036953">
    <property type="entry name" value="GreA/GreB_C_sf"/>
</dbReference>
<dbReference type="InterPro" id="IPR018151">
    <property type="entry name" value="TF_GreA/GreB_CS"/>
</dbReference>
<dbReference type="InterPro" id="IPR006359">
    <property type="entry name" value="Tscrpt_elong_fac_GreA"/>
</dbReference>
<dbReference type="InterPro" id="IPR028624">
    <property type="entry name" value="Tscrpt_elong_fac_GreA/B"/>
</dbReference>
<dbReference type="InterPro" id="IPR001437">
    <property type="entry name" value="Tscrpt_elong_fac_GreA/B_C"/>
</dbReference>
<dbReference type="InterPro" id="IPR023459">
    <property type="entry name" value="Tscrpt_elong_fac_GreA/B_fam"/>
</dbReference>
<dbReference type="InterPro" id="IPR022691">
    <property type="entry name" value="Tscrpt_elong_fac_GreA/B_N"/>
</dbReference>
<dbReference type="InterPro" id="IPR036805">
    <property type="entry name" value="Tscrpt_elong_fac_GreA/B_N_sf"/>
</dbReference>
<dbReference type="NCBIfam" id="TIGR01462">
    <property type="entry name" value="greA"/>
    <property type="match status" value="1"/>
</dbReference>
<dbReference type="NCBIfam" id="NF001260">
    <property type="entry name" value="PRK00226.1-1"/>
    <property type="match status" value="1"/>
</dbReference>
<dbReference type="NCBIfam" id="NF001263">
    <property type="entry name" value="PRK00226.1-4"/>
    <property type="match status" value="1"/>
</dbReference>
<dbReference type="PANTHER" id="PTHR30437">
    <property type="entry name" value="TRANSCRIPTION ELONGATION FACTOR GREA"/>
    <property type="match status" value="1"/>
</dbReference>
<dbReference type="PANTHER" id="PTHR30437:SF4">
    <property type="entry name" value="TRANSCRIPTION ELONGATION FACTOR GREA"/>
    <property type="match status" value="1"/>
</dbReference>
<dbReference type="Pfam" id="PF01272">
    <property type="entry name" value="GreA_GreB"/>
    <property type="match status" value="1"/>
</dbReference>
<dbReference type="Pfam" id="PF03449">
    <property type="entry name" value="GreA_GreB_N"/>
    <property type="match status" value="1"/>
</dbReference>
<dbReference type="PIRSF" id="PIRSF006092">
    <property type="entry name" value="GreA_GreB"/>
    <property type="match status" value="1"/>
</dbReference>
<dbReference type="SUPFAM" id="SSF54534">
    <property type="entry name" value="FKBP-like"/>
    <property type="match status" value="1"/>
</dbReference>
<dbReference type="SUPFAM" id="SSF46557">
    <property type="entry name" value="GreA transcript cleavage protein, N-terminal domain"/>
    <property type="match status" value="1"/>
</dbReference>
<dbReference type="PROSITE" id="PS00829">
    <property type="entry name" value="GREAB_1"/>
    <property type="match status" value="1"/>
</dbReference>
<dbReference type="PROSITE" id="PS00830">
    <property type="entry name" value="GREAB_2"/>
    <property type="match status" value="1"/>
</dbReference>
<organism>
    <name type="scientific">Streptococcus pneumoniae (strain Taiwan19F-14)</name>
    <dbReference type="NCBI Taxonomy" id="487213"/>
    <lineage>
        <taxon>Bacteria</taxon>
        <taxon>Bacillati</taxon>
        <taxon>Bacillota</taxon>
        <taxon>Bacilli</taxon>
        <taxon>Lactobacillales</taxon>
        <taxon>Streptococcaceae</taxon>
        <taxon>Streptococcus</taxon>
    </lineage>
</organism>